<evidence type="ECO:0000269" key="1">
    <source>
    </source>
</evidence>
<reference key="1">
    <citation type="journal article" date="1984" name="Hoppe-Seyler's Z. Physiol. Chem.">
        <title>Purification, characterization and sequence determination of a double-headed trypsin inhibitor peptide from Trichosanthes kirilowii (a Chinese medical herb).</title>
        <authorList>
            <person name="Tan F."/>
            <person name="Zhang G."/>
            <person name="Mu J."/>
            <person name="Lin N."/>
            <person name="Chi C."/>
        </authorList>
    </citation>
    <scope>PROTEIN SEQUENCE</scope>
</reference>
<organism>
    <name type="scientific">Trichosanthes kirilowii</name>
    <name type="common">Chinese snake gourd</name>
    <name type="synonym">Chinese cucumber</name>
    <dbReference type="NCBI Taxonomy" id="3677"/>
    <lineage>
        <taxon>Eukaryota</taxon>
        <taxon>Viridiplantae</taxon>
        <taxon>Streptophyta</taxon>
        <taxon>Embryophyta</taxon>
        <taxon>Tracheophyta</taxon>
        <taxon>Spermatophyta</taxon>
        <taxon>Magnoliopsida</taxon>
        <taxon>eudicotyledons</taxon>
        <taxon>Gunneridae</taxon>
        <taxon>Pentapetalae</taxon>
        <taxon>rosids</taxon>
        <taxon>fabids</taxon>
        <taxon>Cucurbitales</taxon>
        <taxon>Cucurbitaceae</taxon>
        <taxon>Sicyoeae</taxon>
        <taxon>Trichosanthes</taxon>
    </lineage>
</organism>
<accession>P01069</accession>
<comment type="function">
    <text>Has two active sites that simultaneously bind and inhibit trypsin.</text>
</comment>
<name>ITRY_TRIKI</name>
<protein>
    <recommendedName>
        <fullName>Trypsin inhibitor</fullName>
    </recommendedName>
</protein>
<keyword id="KW-0903">Direct protein sequencing</keyword>
<keyword id="KW-1015">Disulfide bond</keyword>
<keyword id="KW-0646">Protease inhibitor</keyword>
<keyword id="KW-0722">Serine protease inhibitor</keyword>
<dbReference type="PIR" id="A01308">
    <property type="entry name" value="TITZ"/>
</dbReference>
<dbReference type="GO" id="GO:0004867">
    <property type="term" value="F:serine-type endopeptidase inhibitor activity"/>
    <property type="evidence" value="ECO:0007669"/>
    <property type="project" value="UniProtKB-KW"/>
</dbReference>
<proteinExistence type="evidence at protein level"/>
<feature type="chain" id="PRO_0000084273" description="Trypsin inhibitor">
    <location>
        <begin position="1"/>
        <end position="41"/>
    </location>
</feature>
<feature type="site" description="Interaction with trypsin">
    <location>
        <position position="20"/>
    </location>
</feature>
<feature type="site" description="Interaction with trypsin">
    <location>
        <position position="30"/>
    </location>
</feature>
<feature type="disulfide bond">
    <location>
        <begin position="15"/>
        <end position="26"/>
    </location>
</feature>
<feature type="disulfide bond">
    <location>
        <begin position="17"/>
        <end position="24"/>
    </location>
</feature>
<feature type="disulfide bond" evidence="1">
    <location>
        <begin position="29"/>
        <end position="37"/>
    </location>
</feature>
<sequence>LLMPVKPNDDRVIGCWCISRGYLCGCMPCKLNDDSLCGRKG</sequence>